<keyword id="KW-0028">Amino-acid biosynthesis</keyword>
<keyword id="KW-0055">Arginine biosynthesis</keyword>
<keyword id="KW-0067">ATP-binding</keyword>
<keyword id="KW-0963">Cytoplasm</keyword>
<keyword id="KW-0418">Kinase</keyword>
<keyword id="KW-0547">Nucleotide-binding</keyword>
<keyword id="KW-1185">Reference proteome</keyword>
<keyword id="KW-0808">Transferase</keyword>
<feature type="chain" id="PRO_0000264721" description="Acetylglutamate kinase">
    <location>
        <begin position="1"/>
        <end position="308"/>
    </location>
</feature>
<feature type="binding site" evidence="1">
    <location>
        <begin position="64"/>
        <end position="65"/>
    </location>
    <ligand>
        <name>substrate</name>
    </ligand>
</feature>
<feature type="binding site" evidence="1">
    <location>
        <position position="86"/>
    </location>
    <ligand>
        <name>substrate</name>
    </ligand>
</feature>
<feature type="binding site" evidence="1">
    <location>
        <position position="192"/>
    </location>
    <ligand>
        <name>substrate</name>
    </ligand>
</feature>
<feature type="site" description="Transition state stabilizer" evidence="1">
    <location>
        <position position="29"/>
    </location>
</feature>
<feature type="site" description="Transition state stabilizer" evidence="1">
    <location>
        <position position="255"/>
    </location>
</feature>
<comment type="function">
    <text evidence="1">Catalyzes the ATP-dependent phosphorylation of N-acetyl-L-glutamate.</text>
</comment>
<comment type="catalytic activity">
    <reaction evidence="1">
        <text>N-acetyl-L-glutamate + ATP = N-acetyl-L-glutamyl 5-phosphate + ADP</text>
        <dbReference type="Rhea" id="RHEA:14629"/>
        <dbReference type="ChEBI" id="CHEBI:30616"/>
        <dbReference type="ChEBI" id="CHEBI:44337"/>
        <dbReference type="ChEBI" id="CHEBI:57936"/>
        <dbReference type="ChEBI" id="CHEBI:456216"/>
        <dbReference type="EC" id="2.7.2.8"/>
    </reaction>
</comment>
<comment type="pathway">
    <text evidence="1">Amino-acid biosynthesis; L-arginine biosynthesis; N(2)-acetyl-L-ornithine from L-glutamate: step 2/4.</text>
</comment>
<comment type="subcellular location">
    <subcellularLocation>
        <location evidence="1">Cytoplasm</location>
    </subcellularLocation>
</comment>
<comment type="similarity">
    <text evidence="1">Belongs to the acetylglutamate kinase family. ArgB subfamily.</text>
</comment>
<sequence>MPLSPDPYSALRHAAKYVQQFRRKTFVVKLGGAMLSDPRLRRAACEQIALLWTFSIRPVVVHGGGPELDTLCDALHLPVEKVAGRRVTSAPVLDAAKMVLAGKLHTDLLADLQAAGVPAVGLSGVDAGLIKARKRPPVMVTEAGATEGKLVDYGLVGDIEQVDTRVVEHLRSADYVPVIAPLSGGTDGAVYNTNADTVAAALAVALSAEKLFFLVQVPGLLKNVSDPSSLVTLANLTDLATMESTGAIAGGMKPKAHAIRHALVGGVGSVHLVSGVQPNALLEEVFTNEGSGTMVVRENAQKPAGAVG</sequence>
<reference key="1">
    <citation type="journal article" date="2006" name="Proc. Natl. Acad. Sci. U.S.A.">
        <title>Evolution of sensory complexity recorded in a myxobacterial genome.</title>
        <authorList>
            <person name="Goldman B.S."/>
            <person name="Nierman W.C."/>
            <person name="Kaiser D."/>
            <person name="Slater S.C."/>
            <person name="Durkin A.S."/>
            <person name="Eisen J.A."/>
            <person name="Ronning C.M."/>
            <person name="Barbazuk W.B."/>
            <person name="Blanchard M."/>
            <person name="Field C."/>
            <person name="Halling C."/>
            <person name="Hinkle G."/>
            <person name="Iartchuk O."/>
            <person name="Kim H.S."/>
            <person name="Mackenzie C."/>
            <person name="Madupu R."/>
            <person name="Miller N."/>
            <person name="Shvartsbeyn A."/>
            <person name="Sullivan S.A."/>
            <person name="Vaudin M."/>
            <person name="Wiegand R."/>
            <person name="Kaplan H.B."/>
        </authorList>
    </citation>
    <scope>NUCLEOTIDE SEQUENCE [LARGE SCALE GENOMIC DNA]</scope>
    <source>
        <strain>DK1622</strain>
    </source>
</reference>
<accession>Q1D264</accession>
<protein>
    <recommendedName>
        <fullName evidence="1">Acetylglutamate kinase</fullName>
        <ecNumber evidence="1">2.7.2.8</ecNumber>
    </recommendedName>
    <alternativeName>
        <fullName evidence="1">N-acetyl-L-glutamate 5-phosphotransferase</fullName>
    </alternativeName>
    <alternativeName>
        <fullName evidence="1">NAG kinase</fullName>
        <shortName evidence="1">NAGK</shortName>
    </alternativeName>
</protein>
<dbReference type="EC" id="2.7.2.8" evidence="1"/>
<dbReference type="EMBL" id="CP000113">
    <property type="protein sequence ID" value="ABF89171.1"/>
    <property type="molecule type" value="Genomic_DNA"/>
</dbReference>
<dbReference type="RefSeq" id="WP_011555079.1">
    <property type="nucleotide sequence ID" value="NC_008095.1"/>
</dbReference>
<dbReference type="SMR" id="Q1D264"/>
<dbReference type="STRING" id="246197.MXAN_5105"/>
<dbReference type="EnsemblBacteria" id="ABF89171">
    <property type="protein sequence ID" value="ABF89171"/>
    <property type="gene ID" value="MXAN_5105"/>
</dbReference>
<dbReference type="GeneID" id="41362389"/>
<dbReference type="KEGG" id="mxa:MXAN_5105"/>
<dbReference type="eggNOG" id="COG0548">
    <property type="taxonomic scope" value="Bacteria"/>
</dbReference>
<dbReference type="HOGENOM" id="CLU_053680_0_0_7"/>
<dbReference type="OrthoDB" id="9803155at2"/>
<dbReference type="UniPathway" id="UPA00068">
    <property type="reaction ID" value="UER00107"/>
</dbReference>
<dbReference type="Proteomes" id="UP000002402">
    <property type="component" value="Chromosome"/>
</dbReference>
<dbReference type="GO" id="GO:0005737">
    <property type="term" value="C:cytoplasm"/>
    <property type="evidence" value="ECO:0007669"/>
    <property type="project" value="UniProtKB-SubCell"/>
</dbReference>
<dbReference type="GO" id="GO:0003991">
    <property type="term" value="F:acetylglutamate kinase activity"/>
    <property type="evidence" value="ECO:0007669"/>
    <property type="project" value="UniProtKB-UniRule"/>
</dbReference>
<dbReference type="GO" id="GO:0005524">
    <property type="term" value="F:ATP binding"/>
    <property type="evidence" value="ECO:0007669"/>
    <property type="project" value="UniProtKB-UniRule"/>
</dbReference>
<dbReference type="GO" id="GO:0042450">
    <property type="term" value="P:arginine biosynthetic process via ornithine"/>
    <property type="evidence" value="ECO:0007669"/>
    <property type="project" value="UniProtKB-UniRule"/>
</dbReference>
<dbReference type="GO" id="GO:0006526">
    <property type="term" value="P:L-arginine biosynthetic process"/>
    <property type="evidence" value="ECO:0007669"/>
    <property type="project" value="UniProtKB-UniPathway"/>
</dbReference>
<dbReference type="FunFam" id="3.40.1160.10:FF:000004">
    <property type="entry name" value="Acetylglutamate kinase"/>
    <property type="match status" value="1"/>
</dbReference>
<dbReference type="Gene3D" id="3.40.1160.10">
    <property type="entry name" value="Acetylglutamate kinase-like"/>
    <property type="match status" value="1"/>
</dbReference>
<dbReference type="HAMAP" id="MF_00082">
    <property type="entry name" value="ArgB"/>
    <property type="match status" value="1"/>
</dbReference>
<dbReference type="InterPro" id="IPR036393">
    <property type="entry name" value="AceGlu_kinase-like_sf"/>
</dbReference>
<dbReference type="InterPro" id="IPR004662">
    <property type="entry name" value="AcgluKinase_fam"/>
</dbReference>
<dbReference type="InterPro" id="IPR037528">
    <property type="entry name" value="ArgB"/>
</dbReference>
<dbReference type="InterPro" id="IPR001048">
    <property type="entry name" value="Asp/Glu/Uridylate_kinase"/>
</dbReference>
<dbReference type="NCBIfam" id="TIGR00761">
    <property type="entry name" value="argB"/>
    <property type="match status" value="1"/>
</dbReference>
<dbReference type="PANTHER" id="PTHR23342">
    <property type="entry name" value="N-ACETYLGLUTAMATE SYNTHASE"/>
    <property type="match status" value="1"/>
</dbReference>
<dbReference type="PANTHER" id="PTHR23342:SF0">
    <property type="entry name" value="N-ACETYLGLUTAMATE SYNTHASE, MITOCHONDRIAL"/>
    <property type="match status" value="1"/>
</dbReference>
<dbReference type="Pfam" id="PF00696">
    <property type="entry name" value="AA_kinase"/>
    <property type="match status" value="1"/>
</dbReference>
<dbReference type="PIRSF" id="PIRSF000728">
    <property type="entry name" value="NAGK"/>
    <property type="match status" value="1"/>
</dbReference>
<dbReference type="SUPFAM" id="SSF53633">
    <property type="entry name" value="Carbamate kinase-like"/>
    <property type="match status" value="1"/>
</dbReference>
<organism>
    <name type="scientific">Myxococcus xanthus (strain DK1622)</name>
    <dbReference type="NCBI Taxonomy" id="246197"/>
    <lineage>
        <taxon>Bacteria</taxon>
        <taxon>Pseudomonadati</taxon>
        <taxon>Myxococcota</taxon>
        <taxon>Myxococcia</taxon>
        <taxon>Myxococcales</taxon>
        <taxon>Cystobacterineae</taxon>
        <taxon>Myxococcaceae</taxon>
        <taxon>Myxococcus</taxon>
    </lineage>
</organism>
<evidence type="ECO:0000255" key="1">
    <source>
        <dbReference type="HAMAP-Rule" id="MF_00082"/>
    </source>
</evidence>
<name>ARGB_MYXXD</name>
<proteinExistence type="inferred from homology"/>
<gene>
    <name evidence="1" type="primary">argB</name>
    <name type="ordered locus">MXAN_5105</name>
</gene>